<sequence>MEKQKRGFVHYIVQGSLVKQILVGLIAGILLAWLAPSVAKSVSLLGTLFVGALKAVAPVLVWILVMSSIANHKKGQKTNIRPILILYILGTFFAALVAVAGSFIFPLPLVLAVNDAQMSPPENIIEVIKGLLVNVVANPVNALLNGNYIGILAWAIGLGIALRHAADSTKSLIHDMSEAVTQVVRVVIRFAPVGIFGLVSATIAETGFNALLGYVQLLVVLLSCMLVMALVVNPLIVYWKIRRNPYPLVFACLRESGVTAFFTRSSAANIPVNMAMCRRMNLHEDTYSVSIPLGATINMEGAAVTIPVLTLAAVNTLGIPVDVPTALLLSVVSAICACGASGVAGGSLLLIPLACSMFGISNEIAMQVVAVGLIIGVLQDSAETSLNSSTDVLFTAAVCQAEDDRLSSDQLTQRN</sequence>
<accession>Q7N0A2</accession>
<feature type="chain" id="PRO_0000309105" description="Serine/threonine transporter SstT">
    <location>
        <begin position="1"/>
        <end position="415"/>
    </location>
</feature>
<feature type="transmembrane region" description="Helical" evidence="1">
    <location>
        <begin position="15"/>
        <end position="35"/>
    </location>
</feature>
<feature type="transmembrane region" description="Helical" evidence="1">
    <location>
        <begin position="45"/>
        <end position="65"/>
    </location>
</feature>
<feature type="transmembrane region" description="Helical" evidence="1">
    <location>
        <begin position="85"/>
        <end position="105"/>
    </location>
</feature>
<feature type="transmembrane region" description="Helical" evidence="1">
    <location>
        <begin position="142"/>
        <end position="162"/>
    </location>
</feature>
<feature type="transmembrane region" description="Helical" evidence="1">
    <location>
        <begin position="193"/>
        <end position="213"/>
    </location>
</feature>
<feature type="transmembrane region" description="Helical" evidence="1">
    <location>
        <begin position="217"/>
        <end position="237"/>
    </location>
</feature>
<feature type="transmembrane region" description="Helical" evidence="1">
    <location>
        <begin position="301"/>
        <end position="321"/>
    </location>
</feature>
<feature type="transmembrane region" description="Helical" evidence="1">
    <location>
        <begin position="331"/>
        <end position="351"/>
    </location>
</feature>
<reference key="1">
    <citation type="journal article" date="2003" name="Nat. Biotechnol.">
        <title>The genome sequence of the entomopathogenic bacterium Photorhabdus luminescens.</title>
        <authorList>
            <person name="Duchaud E."/>
            <person name="Rusniok C."/>
            <person name="Frangeul L."/>
            <person name="Buchrieser C."/>
            <person name="Givaudan A."/>
            <person name="Taourit S."/>
            <person name="Bocs S."/>
            <person name="Boursaux-Eude C."/>
            <person name="Chandler M."/>
            <person name="Charles J.-F."/>
            <person name="Dassa E."/>
            <person name="Derose R."/>
            <person name="Derzelle S."/>
            <person name="Freyssinet G."/>
            <person name="Gaudriault S."/>
            <person name="Medigue C."/>
            <person name="Lanois A."/>
            <person name="Powell K."/>
            <person name="Siguier P."/>
            <person name="Vincent R."/>
            <person name="Wingate V."/>
            <person name="Zouine M."/>
            <person name="Glaser P."/>
            <person name="Boemare N."/>
            <person name="Danchin A."/>
            <person name="Kunst F."/>
        </authorList>
    </citation>
    <scope>NUCLEOTIDE SEQUENCE [LARGE SCALE GENOMIC DNA]</scope>
    <source>
        <strain>DSM 15139 / CIP 105565 / TT01</strain>
    </source>
</reference>
<comment type="function">
    <text evidence="1">Involved in the import of serine and threonine into the cell, with the concomitant import of sodium (symport system).</text>
</comment>
<comment type="catalytic activity">
    <reaction evidence="1">
        <text>L-serine(in) + Na(+)(in) = L-serine(out) + Na(+)(out)</text>
        <dbReference type="Rhea" id="RHEA:29575"/>
        <dbReference type="ChEBI" id="CHEBI:29101"/>
        <dbReference type="ChEBI" id="CHEBI:33384"/>
    </reaction>
    <physiologicalReaction direction="right-to-left" evidence="1">
        <dbReference type="Rhea" id="RHEA:29577"/>
    </physiologicalReaction>
</comment>
<comment type="catalytic activity">
    <reaction evidence="1">
        <text>L-threonine(in) + Na(+)(in) = L-threonine(out) + Na(+)(out)</text>
        <dbReference type="Rhea" id="RHEA:69999"/>
        <dbReference type="ChEBI" id="CHEBI:29101"/>
        <dbReference type="ChEBI" id="CHEBI:57926"/>
    </reaction>
    <physiologicalReaction direction="right-to-left" evidence="1">
        <dbReference type="Rhea" id="RHEA:70001"/>
    </physiologicalReaction>
</comment>
<comment type="subcellular location">
    <subcellularLocation>
        <location evidence="1">Cell inner membrane</location>
        <topology evidence="1">Multi-pass membrane protein</topology>
    </subcellularLocation>
</comment>
<comment type="similarity">
    <text evidence="1">Belongs to the dicarboxylate/amino acid:cation symporter (DAACS) (TC 2.A.23) family.</text>
</comment>
<dbReference type="EMBL" id="BX571872">
    <property type="protein sequence ID" value="CAE16363.1"/>
    <property type="molecule type" value="Genomic_DNA"/>
</dbReference>
<dbReference type="RefSeq" id="WP_011148123.1">
    <property type="nucleotide sequence ID" value="NC_005126.1"/>
</dbReference>
<dbReference type="SMR" id="Q7N0A2"/>
<dbReference type="GeneID" id="48850216"/>
<dbReference type="KEGG" id="plu:plu3991"/>
<dbReference type="eggNOG" id="COG3633">
    <property type="taxonomic scope" value="Bacteria"/>
</dbReference>
<dbReference type="HOGENOM" id="CLU_044581_0_0_6"/>
<dbReference type="OrthoDB" id="9768885at2"/>
<dbReference type="Proteomes" id="UP000002514">
    <property type="component" value="Chromosome"/>
</dbReference>
<dbReference type="GO" id="GO:0005886">
    <property type="term" value="C:plasma membrane"/>
    <property type="evidence" value="ECO:0007669"/>
    <property type="project" value="UniProtKB-SubCell"/>
</dbReference>
<dbReference type="GO" id="GO:0005295">
    <property type="term" value="F:neutral L-amino acid:sodium symporter activity"/>
    <property type="evidence" value="ECO:0007669"/>
    <property type="project" value="TreeGrafter"/>
</dbReference>
<dbReference type="GO" id="GO:0032329">
    <property type="term" value="P:serine transport"/>
    <property type="evidence" value="ECO:0007669"/>
    <property type="project" value="InterPro"/>
</dbReference>
<dbReference type="GO" id="GO:0015826">
    <property type="term" value="P:threonine transport"/>
    <property type="evidence" value="ECO:0007669"/>
    <property type="project" value="InterPro"/>
</dbReference>
<dbReference type="FunFam" id="1.10.3860.10:FF:000003">
    <property type="entry name" value="Serine/threonine transporter sstT"/>
    <property type="match status" value="1"/>
</dbReference>
<dbReference type="Gene3D" id="1.10.3860.10">
    <property type="entry name" value="Sodium:dicarboxylate symporter"/>
    <property type="match status" value="1"/>
</dbReference>
<dbReference type="HAMAP" id="MF_01582">
    <property type="entry name" value="Ser_Thr_transp_SstT"/>
    <property type="match status" value="1"/>
</dbReference>
<dbReference type="InterPro" id="IPR001991">
    <property type="entry name" value="Na-dicarboxylate_symporter"/>
</dbReference>
<dbReference type="InterPro" id="IPR036458">
    <property type="entry name" value="Na:dicarbo_symporter_sf"/>
</dbReference>
<dbReference type="InterPro" id="IPR023025">
    <property type="entry name" value="Ser_Thr_transp_SstT"/>
</dbReference>
<dbReference type="NCBIfam" id="NF010151">
    <property type="entry name" value="PRK13628.1"/>
    <property type="match status" value="1"/>
</dbReference>
<dbReference type="PANTHER" id="PTHR42865">
    <property type="entry name" value="PROTON/GLUTAMATE-ASPARTATE SYMPORTER"/>
    <property type="match status" value="1"/>
</dbReference>
<dbReference type="PANTHER" id="PTHR42865:SF8">
    <property type="entry name" value="SERINE_THREONINE TRANSPORTER SSTT"/>
    <property type="match status" value="1"/>
</dbReference>
<dbReference type="Pfam" id="PF00375">
    <property type="entry name" value="SDF"/>
    <property type="match status" value="1"/>
</dbReference>
<dbReference type="PRINTS" id="PR00173">
    <property type="entry name" value="EDTRNSPORT"/>
</dbReference>
<dbReference type="SUPFAM" id="SSF118215">
    <property type="entry name" value="Proton glutamate symport protein"/>
    <property type="match status" value="1"/>
</dbReference>
<evidence type="ECO:0000255" key="1">
    <source>
        <dbReference type="HAMAP-Rule" id="MF_01582"/>
    </source>
</evidence>
<gene>
    <name evidence="1" type="primary">sstT</name>
    <name type="ordered locus">plu3991</name>
</gene>
<name>SSTT_PHOLL</name>
<protein>
    <recommendedName>
        <fullName evidence="1">Serine/threonine transporter SstT</fullName>
    </recommendedName>
    <alternativeName>
        <fullName evidence="1">Na(+)/serine-threonine symporter</fullName>
    </alternativeName>
</protein>
<keyword id="KW-0029">Amino-acid transport</keyword>
<keyword id="KW-0997">Cell inner membrane</keyword>
<keyword id="KW-1003">Cell membrane</keyword>
<keyword id="KW-0472">Membrane</keyword>
<keyword id="KW-1185">Reference proteome</keyword>
<keyword id="KW-0769">Symport</keyword>
<keyword id="KW-0812">Transmembrane</keyword>
<keyword id="KW-1133">Transmembrane helix</keyword>
<keyword id="KW-0813">Transport</keyword>
<proteinExistence type="inferred from homology"/>
<organism>
    <name type="scientific">Photorhabdus laumondii subsp. laumondii (strain DSM 15139 / CIP 105565 / TT01)</name>
    <name type="common">Photorhabdus luminescens subsp. laumondii</name>
    <dbReference type="NCBI Taxonomy" id="243265"/>
    <lineage>
        <taxon>Bacteria</taxon>
        <taxon>Pseudomonadati</taxon>
        <taxon>Pseudomonadota</taxon>
        <taxon>Gammaproteobacteria</taxon>
        <taxon>Enterobacterales</taxon>
        <taxon>Morganellaceae</taxon>
        <taxon>Photorhabdus</taxon>
    </lineage>
</organism>